<comment type="subunit">
    <text evidence="1">Part of the 50S ribosomal subunit. Contacts protein L32.</text>
</comment>
<comment type="similarity">
    <text evidence="1">Belongs to the bacterial ribosomal protein bL17 family.</text>
</comment>
<proteinExistence type="inferred from homology"/>
<dbReference type="EMBL" id="CP000020">
    <property type="protein sequence ID" value="AAW84758.1"/>
    <property type="molecule type" value="Genomic_DNA"/>
</dbReference>
<dbReference type="RefSeq" id="WP_005417273.1">
    <property type="nucleotide sequence ID" value="NZ_CAWLES010000001.1"/>
</dbReference>
<dbReference type="RefSeq" id="YP_203646.1">
    <property type="nucleotide sequence ID" value="NC_006840.2"/>
</dbReference>
<dbReference type="SMR" id="Q5E888"/>
<dbReference type="STRING" id="312309.VF_0263"/>
<dbReference type="EnsemblBacteria" id="AAW84758">
    <property type="protein sequence ID" value="AAW84758"/>
    <property type="gene ID" value="VF_0263"/>
</dbReference>
<dbReference type="GeneID" id="54162884"/>
<dbReference type="KEGG" id="vfi:VF_0263"/>
<dbReference type="PATRIC" id="fig|312309.11.peg.258"/>
<dbReference type="eggNOG" id="COG0203">
    <property type="taxonomic scope" value="Bacteria"/>
</dbReference>
<dbReference type="HOGENOM" id="CLU_074407_2_0_6"/>
<dbReference type="OrthoDB" id="9809073at2"/>
<dbReference type="Proteomes" id="UP000000537">
    <property type="component" value="Chromosome I"/>
</dbReference>
<dbReference type="GO" id="GO:0022625">
    <property type="term" value="C:cytosolic large ribosomal subunit"/>
    <property type="evidence" value="ECO:0007669"/>
    <property type="project" value="TreeGrafter"/>
</dbReference>
<dbReference type="GO" id="GO:0003735">
    <property type="term" value="F:structural constituent of ribosome"/>
    <property type="evidence" value="ECO:0007669"/>
    <property type="project" value="InterPro"/>
</dbReference>
<dbReference type="GO" id="GO:0006412">
    <property type="term" value="P:translation"/>
    <property type="evidence" value="ECO:0007669"/>
    <property type="project" value="UniProtKB-UniRule"/>
</dbReference>
<dbReference type="FunFam" id="3.90.1030.10:FF:000001">
    <property type="entry name" value="50S ribosomal protein L17"/>
    <property type="match status" value="1"/>
</dbReference>
<dbReference type="Gene3D" id="3.90.1030.10">
    <property type="entry name" value="Ribosomal protein L17"/>
    <property type="match status" value="1"/>
</dbReference>
<dbReference type="HAMAP" id="MF_01368">
    <property type="entry name" value="Ribosomal_bL17"/>
    <property type="match status" value="1"/>
</dbReference>
<dbReference type="InterPro" id="IPR000456">
    <property type="entry name" value="Ribosomal_bL17"/>
</dbReference>
<dbReference type="InterPro" id="IPR047859">
    <property type="entry name" value="Ribosomal_bL17_CS"/>
</dbReference>
<dbReference type="InterPro" id="IPR036373">
    <property type="entry name" value="Ribosomal_bL17_sf"/>
</dbReference>
<dbReference type="NCBIfam" id="TIGR00059">
    <property type="entry name" value="L17"/>
    <property type="match status" value="1"/>
</dbReference>
<dbReference type="PANTHER" id="PTHR14413:SF16">
    <property type="entry name" value="LARGE RIBOSOMAL SUBUNIT PROTEIN BL17M"/>
    <property type="match status" value="1"/>
</dbReference>
<dbReference type="PANTHER" id="PTHR14413">
    <property type="entry name" value="RIBOSOMAL PROTEIN L17"/>
    <property type="match status" value="1"/>
</dbReference>
<dbReference type="Pfam" id="PF01196">
    <property type="entry name" value="Ribosomal_L17"/>
    <property type="match status" value="1"/>
</dbReference>
<dbReference type="SUPFAM" id="SSF64263">
    <property type="entry name" value="Prokaryotic ribosomal protein L17"/>
    <property type="match status" value="1"/>
</dbReference>
<dbReference type="PROSITE" id="PS01167">
    <property type="entry name" value="RIBOSOMAL_L17"/>
    <property type="match status" value="1"/>
</dbReference>
<protein>
    <recommendedName>
        <fullName evidence="1">Large ribosomal subunit protein bL17</fullName>
    </recommendedName>
    <alternativeName>
        <fullName evidence="2">50S ribosomal protein L17</fullName>
    </alternativeName>
</protein>
<organism>
    <name type="scientific">Aliivibrio fischeri (strain ATCC 700601 / ES114)</name>
    <name type="common">Vibrio fischeri</name>
    <dbReference type="NCBI Taxonomy" id="312309"/>
    <lineage>
        <taxon>Bacteria</taxon>
        <taxon>Pseudomonadati</taxon>
        <taxon>Pseudomonadota</taxon>
        <taxon>Gammaproteobacteria</taxon>
        <taxon>Vibrionales</taxon>
        <taxon>Vibrionaceae</taxon>
        <taxon>Aliivibrio</taxon>
    </lineage>
</organism>
<reference key="1">
    <citation type="journal article" date="2005" name="Proc. Natl. Acad. Sci. U.S.A.">
        <title>Complete genome sequence of Vibrio fischeri: a symbiotic bacterium with pathogenic congeners.</title>
        <authorList>
            <person name="Ruby E.G."/>
            <person name="Urbanowski M."/>
            <person name="Campbell J."/>
            <person name="Dunn A."/>
            <person name="Faini M."/>
            <person name="Gunsalus R."/>
            <person name="Lostroh P."/>
            <person name="Lupp C."/>
            <person name="McCann J."/>
            <person name="Millikan D."/>
            <person name="Schaefer A."/>
            <person name="Stabb E."/>
            <person name="Stevens A."/>
            <person name="Visick K."/>
            <person name="Whistler C."/>
            <person name="Greenberg E.P."/>
        </authorList>
    </citation>
    <scope>NUCLEOTIDE SEQUENCE [LARGE SCALE GENOMIC DNA]</scope>
    <source>
        <strain>ATCC 700601 / ES114</strain>
    </source>
</reference>
<accession>Q5E888</accession>
<keyword id="KW-1185">Reference proteome</keyword>
<keyword id="KW-0687">Ribonucleoprotein</keyword>
<keyword id="KW-0689">Ribosomal protein</keyword>
<evidence type="ECO:0000255" key="1">
    <source>
        <dbReference type="HAMAP-Rule" id="MF_01368"/>
    </source>
</evidence>
<evidence type="ECO:0000305" key="2"/>
<feature type="chain" id="PRO_1000055990" description="Large ribosomal subunit protein bL17">
    <location>
        <begin position="1"/>
        <end position="126"/>
    </location>
</feature>
<name>RL17_ALIF1</name>
<gene>
    <name evidence="1" type="primary">rplQ</name>
    <name type="ordered locus">VF_0263</name>
</gene>
<sequence>MRHRKSGRQLNRNSSHRKAMFSNMASSLVRHEIIKTTLPKAKELRRVVEPLITLAKTDSVANRRLAFARTRDNEVVAKLFTELGPRFAQRAGGYTRILKCGFRAGDKAPMAYIELVDRPEVEADAE</sequence>